<accession>B1IB77</accession>
<proteinExistence type="inferred from homology"/>
<evidence type="ECO:0000255" key="1">
    <source>
        <dbReference type="HAMAP-Rule" id="MF_00745"/>
    </source>
</evidence>
<feature type="chain" id="PRO_1000133233" description="Protein SprT-like">
    <location>
        <begin position="1"/>
        <end position="149"/>
    </location>
</feature>
<feature type="domain" description="SprT-like" evidence="1">
    <location>
        <begin position="5"/>
        <end position="143"/>
    </location>
</feature>
<feature type="active site" evidence="1">
    <location>
        <position position="65"/>
    </location>
</feature>
<feature type="binding site" evidence="1">
    <location>
        <position position="64"/>
    </location>
    <ligand>
        <name>Zn(2+)</name>
        <dbReference type="ChEBI" id="CHEBI:29105"/>
    </ligand>
</feature>
<feature type="binding site" evidence="1">
    <location>
        <position position="68"/>
    </location>
    <ligand>
        <name>Zn(2+)</name>
        <dbReference type="ChEBI" id="CHEBI:29105"/>
    </ligand>
</feature>
<keyword id="KW-0963">Cytoplasm</keyword>
<keyword id="KW-0479">Metal-binding</keyword>
<keyword id="KW-0862">Zinc</keyword>
<dbReference type="EMBL" id="CP000936">
    <property type="protein sequence ID" value="ACA35820.1"/>
    <property type="molecule type" value="Genomic_DNA"/>
</dbReference>
<dbReference type="RefSeq" id="WP_000778576.1">
    <property type="nucleotide sequence ID" value="NC_010380.1"/>
</dbReference>
<dbReference type="KEGG" id="spv:SPH_1015"/>
<dbReference type="HOGENOM" id="CLU_123820_0_0_9"/>
<dbReference type="Proteomes" id="UP000002163">
    <property type="component" value="Chromosome"/>
</dbReference>
<dbReference type="GO" id="GO:0005737">
    <property type="term" value="C:cytoplasm"/>
    <property type="evidence" value="ECO:0007669"/>
    <property type="project" value="UniProtKB-SubCell"/>
</dbReference>
<dbReference type="GO" id="GO:0008270">
    <property type="term" value="F:zinc ion binding"/>
    <property type="evidence" value="ECO:0007669"/>
    <property type="project" value="UniProtKB-UniRule"/>
</dbReference>
<dbReference type="GO" id="GO:0006950">
    <property type="term" value="P:response to stress"/>
    <property type="evidence" value="ECO:0007669"/>
    <property type="project" value="UniProtKB-ARBA"/>
</dbReference>
<dbReference type="HAMAP" id="MF_00745">
    <property type="entry name" value="SprT_like"/>
    <property type="match status" value="1"/>
</dbReference>
<dbReference type="InterPro" id="IPR006640">
    <property type="entry name" value="SprT-like_domain"/>
</dbReference>
<dbReference type="InterPro" id="IPR035240">
    <property type="entry name" value="SprT_Zn_ribbon"/>
</dbReference>
<dbReference type="InterPro" id="IPR023524">
    <property type="entry name" value="Uncharacterised_SprT-like"/>
</dbReference>
<dbReference type="NCBIfam" id="NF003339">
    <property type="entry name" value="PRK04351.1"/>
    <property type="match status" value="1"/>
</dbReference>
<dbReference type="Pfam" id="PF10263">
    <property type="entry name" value="SprT-like"/>
    <property type="match status" value="1"/>
</dbReference>
<dbReference type="Pfam" id="PF17283">
    <property type="entry name" value="Zn_ribbon_SprT"/>
    <property type="match status" value="1"/>
</dbReference>
<dbReference type="SMART" id="SM00731">
    <property type="entry name" value="SprT"/>
    <property type="match status" value="1"/>
</dbReference>
<sequence length="149" mass="17974">MKLTDYVKQVSLEDFGRAFIHHVQWNRRLRSTGGRFFPKDGHLDFNPKVYQKLGMEVFRKIVRHELCHYHLYFQGKGYQHKDRDFKELLKAVDGLRFVPSLPNSNSKPLKLYRCQSCQQRYQRKRRIDTKRYRCGLCRGKLLLINQPED</sequence>
<gene>
    <name type="ordered locus">SPH_1015</name>
</gene>
<name>SPRTL_STRPI</name>
<organism>
    <name type="scientific">Streptococcus pneumoniae (strain Hungary19A-6)</name>
    <dbReference type="NCBI Taxonomy" id="487214"/>
    <lineage>
        <taxon>Bacteria</taxon>
        <taxon>Bacillati</taxon>
        <taxon>Bacillota</taxon>
        <taxon>Bacilli</taxon>
        <taxon>Lactobacillales</taxon>
        <taxon>Streptococcaceae</taxon>
        <taxon>Streptococcus</taxon>
    </lineage>
</organism>
<protein>
    <recommendedName>
        <fullName evidence="1">Protein SprT-like</fullName>
    </recommendedName>
</protein>
<reference key="1">
    <citation type="journal article" date="2010" name="Genome Biol.">
        <title>Structure and dynamics of the pan-genome of Streptococcus pneumoniae and closely related species.</title>
        <authorList>
            <person name="Donati C."/>
            <person name="Hiller N.L."/>
            <person name="Tettelin H."/>
            <person name="Muzzi A."/>
            <person name="Croucher N.J."/>
            <person name="Angiuoli S.V."/>
            <person name="Oggioni M."/>
            <person name="Dunning Hotopp J.C."/>
            <person name="Hu F.Z."/>
            <person name="Riley D.R."/>
            <person name="Covacci A."/>
            <person name="Mitchell T.J."/>
            <person name="Bentley S.D."/>
            <person name="Kilian M."/>
            <person name="Ehrlich G.D."/>
            <person name="Rappuoli R."/>
            <person name="Moxon E.R."/>
            <person name="Masignani V."/>
        </authorList>
    </citation>
    <scope>NUCLEOTIDE SEQUENCE [LARGE SCALE GENOMIC DNA]</scope>
    <source>
        <strain>Hungary19A-6</strain>
    </source>
</reference>
<comment type="cofactor">
    <cofactor evidence="1">
        <name>Zn(2+)</name>
        <dbReference type="ChEBI" id="CHEBI:29105"/>
    </cofactor>
    <text evidence="1">Binds 1 zinc ion.</text>
</comment>
<comment type="subcellular location">
    <subcellularLocation>
        <location evidence="1">Cytoplasm</location>
    </subcellularLocation>
</comment>
<comment type="similarity">
    <text evidence="1">Belongs to the SprT family.</text>
</comment>